<gene>
    <name evidence="1" type="primary">proS</name>
    <name type="ordered locus">SynWH7803_0622</name>
</gene>
<sequence length="594" mass="65613">MRVSRLMLVTLRDVPADAEIPSHQLLVRGGYIRRIGSGIYAYLPMMWKVLRKINAIVRAELNHLGALETLLPQLQPADLWERSGRWQGYTEGEGIMFHLEDRQNRQLGLGPTHEEVITELAGDLLRSYRQLPVTLYQIQTKFRDEIRPRFGLMRGREFIMKDAYSFHANQEDLENTYQAMATAYARIFERCGLEAVAVDADSGAIGGAASQEYMVTAAAGEDLILTSSDGLYAANQEKATSRPPVALPLAAGEERMIETPDQSSIEQLCAANGLDPTQTVKVLVLLARLDDGREQPTLVSLRGDQDLNEVKLANAVSRSLNAAVLEIRPISENQLCQQDLSEFPFGAIGPDLSDTALKGCRSWENHFLRLADATALDLPRFVCGANSKDQHCWGRTWDAMPAQIKADLRTARAGDQCVHDPSQTLSECRGIEVGHIFQLGRKYSEALDARFTNSAGQQEALLMGCYGIGISRLAQAAVEQHHDEAGISWPLGIAPFQVIVVIAKIQDPTQVALAEELYQSFLDAGIDALLDDRDERAGVKFKDADLIGIPWRIVVGRDAGEGKVEVVERSTRCSTSVPHQEAFQQVKDSISTHL</sequence>
<comment type="function">
    <text evidence="1">Catalyzes the attachment of proline to tRNA(Pro) in a two-step reaction: proline is first activated by ATP to form Pro-AMP and then transferred to the acceptor end of tRNA(Pro). As ProRS can inadvertently accommodate and process non-cognate amino acids such as alanine and cysteine, to avoid such errors it has two additional distinct editing activities against alanine. One activity is designated as 'pretransfer' editing and involves the tRNA(Pro)-independent hydrolysis of activated Ala-AMP. The other activity is designated 'posttransfer' editing and involves deacylation of mischarged Ala-tRNA(Pro). The misacylated Cys-tRNA(Pro) is not edited by ProRS.</text>
</comment>
<comment type="catalytic activity">
    <reaction evidence="1">
        <text>tRNA(Pro) + L-proline + ATP = L-prolyl-tRNA(Pro) + AMP + diphosphate</text>
        <dbReference type="Rhea" id="RHEA:14305"/>
        <dbReference type="Rhea" id="RHEA-COMP:9700"/>
        <dbReference type="Rhea" id="RHEA-COMP:9702"/>
        <dbReference type="ChEBI" id="CHEBI:30616"/>
        <dbReference type="ChEBI" id="CHEBI:33019"/>
        <dbReference type="ChEBI" id="CHEBI:60039"/>
        <dbReference type="ChEBI" id="CHEBI:78442"/>
        <dbReference type="ChEBI" id="CHEBI:78532"/>
        <dbReference type="ChEBI" id="CHEBI:456215"/>
        <dbReference type="EC" id="6.1.1.15"/>
    </reaction>
</comment>
<comment type="subunit">
    <text evidence="1">Homodimer.</text>
</comment>
<comment type="subcellular location">
    <subcellularLocation>
        <location evidence="1">Cytoplasm</location>
    </subcellularLocation>
</comment>
<comment type="domain">
    <text evidence="1">Consists of three domains: the N-terminal catalytic domain, the editing domain and the C-terminal anticodon-binding domain.</text>
</comment>
<comment type="similarity">
    <text evidence="1">Belongs to the class-II aminoacyl-tRNA synthetase family. ProS type 1 subfamily.</text>
</comment>
<proteinExistence type="inferred from homology"/>
<feature type="chain" id="PRO_1000069167" description="Proline--tRNA ligase">
    <location>
        <begin position="1"/>
        <end position="594"/>
    </location>
</feature>
<organism>
    <name type="scientific">Synechococcus sp. (strain WH7803)</name>
    <dbReference type="NCBI Taxonomy" id="32051"/>
    <lineage>
        <taxon>Bacteria</taxon>
        <taxon>Bacillati</taxon>
        <taxon>Cyanobacteriota</taxon>
        <taxon>Cyanophyceae</taxon>
        <taxon>Synechococcales</taxon>
        <taxon>Synechococcaceae</taxon>
        <taxon>Synechococcus</taxon>
    </lineage>
</organism>
<name>SYP_SYNPW</name>
<accession>A5GJD3</accession>
<keyword id="KW-0030">Aminoacyl-tRNA synthetase</keyword>
<keyword id="KW-0067">ATP-binding</keyword>
<keyword id="KW-0963">Cytoplasm</keyword>
<keyword id="KW-0436">Ligase</keyword>
<keyword id="KW-0547">Nucleotide-binding</keyword>
<keyword id="KW-0648">Protein biosynthesis</keyword>
<keyword id="KW-1185">Reference proteome</keyword>
<protein>
    <recommendedName>
        <fullName evidence="1">Proline--tRNA ligase</fullName>
        <ecNumber evidence="1">6.1.1.15</ecNumber>
    </recommendedName>
    <alternativeName>
        <fullName evidence="1">Prolyl-tRNA synthetase</fullName>
        <shortName evidence="1">ProRS</shortName>
    </alternativeName>
</protein>
<evidence type="ECO:0000255" key="1">
    <source>
        <dbReference type="HAMAP-Rule" id="MF_01569"/>
    </source>
</evidence>
<reference key="1">
    <citation type="submission" date="2006-05" db="EMBL/GenBank/DDBJ databases">
        <authorList>
            <consortium name="Genoscope"/>
        </authorList>
    </citation>
    <scope>NUCLEOTIDE SEQUENCE [LARGE SCALE GENOMIC DNA]</scope>
    <source>
        <strain>WH7803</strain>
    </source>
</reference>
<dbReference type="EC" id="6.1.1.15" evidence="1"/>
<dbReference type="EMBL" id="CT971583">
    <property type="protein sequence ID" value="CAK23048.1"/>
    <property type="molecule type" value="Genomic_DNA"/>
</dbReference>
<dbReference type="SMR" id="A5GJD3"/>
<dbReference type="STRING" id="32051.SynWH7803_0622"/>
<dbReference type="KEGG" id="syx:SynWH7803_0622"/>
<dbReference type="eggNOG" id="COG0442">
    <property type="taxonomic scope" value="Bacteria"/>
</dbReference>
<dbReference type="HOGENOM" id="CLU_016739_0_0_3"/>
<dbReference type="OrthoDB" id="9809052at2"/>
<dbReference type="Proteomes" id="UP000001566">
    <property type="component" value="Chromosome"/>
</dbReference>
<dbReference type="GO" id="GO:0005829">
    <property type="term" value="C:cytosol"/>
    <property type="evidence" value="ECO:0007669"/>
    <property type="project" value="TreeGrafter"/>
</dbReference>
<dbReference type="GO" id="GO:0002161">
    <property type="term" value="F:aminoacyl-tRNA deacylase activity"/>
    <property type="evidence" value="ECO:0007669"/>
    <property type="project" value="InterPro"/>
</dbReference>
<dbReference type="GO" id="GO:0005524">
    <property type="term" value="F:ATP binding"/>
    <property type="evidence" value="ECO:0007669"/>
    <property type="project" value="UniProtKB-UniRule"/>
</dbReference>
<dbReference type="GO" id="GO:0004827">
    <property type="term" value="F:proline-tRNA ligase activity"/>
    <property type="evidence" value="ECO:0007669"/>
    <property type="project" value="UniProtKB-UniRule"/>
</dbReference>
<dbReference type="GO" id="GO:0006433">
    <property type="term" value="P:prolyl-tRNA aminoacylation"/>
    <property type="evidence" value="ECO:0007669"/>
    <property type="project" value="UniProtKB-UniRule"/>
</dbReference>
<dbReference type="CDD" id="cd04334">
    <property type="entry name" value="ProRS-INS"/>
    <property type="match status" value="1"/>
</dbReference>
<dbReference type="CDD" id="cd00861">
    <property type="entry name" value="ProRS_anticodon_short"/>
    <property type="match status" value="1"/>
</dbReference>
<dbReference type="CDD" id="cd00779">
    <property type="entry name" value="ProRS_core_prok"/>
    <property type="match status" value="1"/>
</dbReference>
<dbReference type="Gene3D" id="3.40.50.800">
    <property type="entry name" value="Anticodon-binding domain"/>
    <property type="match status" value="1"/>
</dbReference>
<dbReference type="Gene3D" id="3.30.930.10">
    <property type="entry name" value="Bira Bifunctional Protein, Domain 2"/>
    <property type="match status" value="2"/>
</dbReference>
<dbReference type="HAMAP" id="MF_01569">
    <property type="entry name" value="Pro_tRNA_synth_type1"/>
    <property type="match status" value="1"/>
</dbReference>
<dbReference type="InterPro" id="IPR002314">
    <property type="entry name" value="aa-tRNA-synt_IIb"/>
</dbReference>
<dbReference type="InterPro" id="IPR006195">
    <property type="entry name" value="aa-tRNA-synth_II"/>
</dbReference>
<dbReference type="InterPro" id="IPR045864">
    <property type="entry name" value="aa-tRNA-synth_II/BPL/LPL"/>
</dbReference>
<dbReference type="InterPro" id="IPR004154">
    <property type="entry name" value="Anticodon-bd"/>
</dbReference>
<dbReference type="InterPro" id="IPR036621">
    <property type="entry name" value="Anticodon-bd_dom_sf"/>
</dbReference>
<dbReference type="InterPro" id="IPR002316">
    <property type="entry name" value="Pro-tRNA-ligase_IIa"/>
</dbReference>
<dbReference type="InterPro" id="IPR004500">
    <property type="entry name" value="Pro-tRNA-synth_IIa_bac-type"/>
</dbReference>
<dbReference type="InterPro" id="IPR023717">
    <property type="entry name" value="Pro-tRNA-Synthase_IIa_type1"/>
</dbReference>
<dbReference type="InterPro" id="IPR050062">
    <property type="entry name" value="Pro-tRNA_synthetase"/>
</dbReference>
<dbReference type="InterPro" id="IPR044140">
    <property type="entry name" value="ProRS_anticodon_short"/>
</dbReference>
<dbReference type="InterPro" id="IPR033730">
    <property type="entry name" value="ProRS_core_prok"/>
</dbReference>
<dbReference type="InterPro" id="IPR036754">
    <property type="entry name" value="YbaK/aa-tRNA-synt-asso_dom_sf"/>
</dbReference>
<dbReference type="InterPro" id="IPR007214">
    <property type="entry name" value="YbaK/aa-tRNA-synth-assoc-dom"/>
</dbReference>
<dbReference type="NCBIfam" id="NF006625">
    <property type="entry name" value="PRK09194.1"/>
    <property type="match status" value="1"/>
</dbReference>
<dbReference type="NCBIfam" id="TIGR00409">
    <property type="entry name" value="proS_fam_II"/>
    <property type="match status" value="1"/>
</dbReference>
<dbReference type="PANTHER" id="PTHR42753">
    <property type="entry name" value="MITOCHONDRIAL RIBOSOME PROTEIN L39/PROLYL-TRNA LIGASE FAMILY MEMBER"/>
    <property type="match status" value="1"/>
</dbReference>
<dbReference type="PANTHER" id="PTHR42753:SF2">
    <property type="entry name" value="PROLINE--TRNA LIGASE"/>
    <property type="match status" value="1"/>
</dbReference>
<dbReference type="Pfam" id="PF03129">
    <property type="entry name" value="HGTP_anticodon"/>
    <property type="match status" value="1"/>
</dbReference>
<dbReference type="Pfam" id="PF00587">
    <property type="entry name" value="tRNA-synt_2b"/>
    <property type="match status" value="1"/>
</dbReference>
<dbReference type="Pfam" id="PF04073">
    <property type="entry name" value="tRNA_edit"/>
    <property type="match status" value="1"/>
</dbReference>
<dbReference type="PRINTS" id="PR01046">
    <property type="entry name" value="TRNASYNTHPRO"/>
</dbReference>
<dbReference type="SUPFAM" id="SSF52954">
    <property type="entry name" value="Class II aaRS ABD-related"/>
    <property type="match status" value="1"/>
</dbReference>
<dbReference type="SUPFAM" id="SSF55681">
    <property type="entry name" value="Class II aaRS and biotin synthetases"/>
    <property type="match status" value="1"/>
</dbReference>
<dbReference type="SUPFAM" id="SSF55826">
    <property type="entry name" value="YbaK/ProRS associated domain"/>
    <property type="match status" value="1"/>
</dbReference>
<dbReference type="PROSITE" id="PS50862">
    <property type="entry name" value="AA_TRNA_LIGASE_II"/>
    <property type="match status" value="1"/>
</dbReference>